<keyword id="KW-0066">ATP synthesis</keyword>
<keyword id="KW-1003">Cell membrane</keyword>
<keyword id="KW-0139">CF(1)</keyword>
<keyword id="KW-0375">Hydrogen ion transport</keyword>
<keyword id="KW-0406">Ion transport</keyword>
<keyword id="KW-0472">Membrane</keyword>
<keyword id="KW-0813">Transport</keyword>
<name>ATPD_LACDB</name>
<feature type="chain" id="PRO_1000184734" description="ATP synthase subunit delta">
    <location>
        <begin position="1"/>
        <end position="180"/>
    </location>
</feature>
<proteinExistence type="inferred from homology"/>
<reference key="1">
    <citation type="journal article" date="2006" name="Proc. Natl. Acad. Sci. U.S.A.">
        <title>Comparative genomics of the lactic acid bacteria.</title>
        <authorList>
            <person name="Makarova K.S."/>
            <person name="Slesarev A."/>
            <person name="Wolf Y.I."/>
            <person name="Sorokin A."/>
            <person name="Mirkin B."/>
            <person name="Koonin E.V."/>
            <person name="Pavlov A."/>
            <person name="Pavlova N."/>
            <person name="Karamychev V."/>
            <person name="Polouchine N."/>
            <person name="Shakhova V."/>
            <person name="Grigoriev I."/>
            <person name="Lou Y."/>
            <person name="Rohksar D."/>
            <person name="Lucas S."/>
            <person name="Huang K."/>
            <person name="Goodstein D.M."/>
            <person name="Hawkins T."/>
            <person name="Plengvidhya V."/>
            <person name="Welker D."/>
            <person name="Hughes J."/>
            <person name="Goh Y."/>
            <person name="Benson A."/>
            <person name="Baldwin K."/>
            <person name="Lee J.-H."/>
            <person name="Diaz-Muniz I."/>
            <person name="Dosti B."/>
            <person name="Smeianov V."/>
            <person name="Wechter W."/>
            <person name="Barabote R."/>
            <person name="Lorca G."/>
            <person name="Altermann E."/>
            <person name="Barrangou R."/>
            <person name="Ganesan B."/>
            <person name="Xie Y."/>
            <person name="Rawsthorne H."/>
            <person name="Tamir D."/>
            <person name="Parker C."/>
            <person name="Breidt F."/>
            <person name="Broadbent J.R."/>
            <person name="Hutkins R."/>
            <person name="O'Sullivan D."/>
            <person name="Steele J."/>
            <person name="Unlu G."/>
            <person name="Saier M.H. Jr."/>
            <person name="Klaenhammer T."/>
            <person name="Richardson P."/>
            <person name="Kozyavkin S."/>
            <person name="Weimer B.C."/>
            <person name="Mills D.A."/>
        </authorList>
    </citation>
    <scope>NUCLEOTIDE SEQUENCE [LARGE SCALE GENOMIC DNA]</scope>
    <source>
        <strain>ATCC BAA-365 / Lb-18</strain>
    </source>
</reference>
<sequence>MALSREETARRYGTAIFDFAKDSGKTELMYSELTELKKAVQAEPRFVQVLSNPVLDAKQKKSLLTAVEQGFSAELQEVLNFLLSYDRFDNLVDIIDYYIHLYNAANHIGTGVAKTALKPDEDQLQRLADSYAKKYGLQALHLENEVDPEIIGGVVLEVEGRVIDGSVKHRLEKIRAMLTK</sequence>
<comment type="function">
    <text evidence="1">F(1)F(0) ATP synthase produces ATP from ADP in the presence of a proton or sodium gradient. F-type ATPases consist of two structural domains, F(1) containing the extramembraneous catalytic core and F(0) containing the membrane proton channel, linked together by a central stalk and a peripheral stalk. During catalysis, ATP synthesis in the catalytic domain of F(1) is coupled via a rotary mechanism of the central stalk subunits to proton translocation.</text>
</comment>
<comment type="function">
    <text evidence="1">This protein is part of the stalk that links CF(0) to CF(1). It either transmits conformational changes from CF(0) to CF(1) or is implicated in proton conduction.</text>
</comment>
<comment type="subunit">
    <text evidence="1">F-type ATPases have 2 components, F(1) - the catalytic core - and F(0) - the membrane proton channel. F(1) has five subunits: alpha(3), beta(3), gamma(1), delta(1), epsilon(1). F(0) has three main subunits: a(1), b(2) and c(10-14). The alpha and beta chains form an alternating ring which encloses part of the gamma chain. F(1) is attached to F(0) by a central stalk formed by the gamma and epsilon chains, while a peripheral stalk is formed by the delta and b chains.</text>
</comment>
<comment type="subcellular location">
    <subcellularLocation>
        <location evidence="1">Cell membrane</location>
        <topology evidence="1">Peripheral membrane protein</topology>
    </subcellularLocation>
</comment>
<comment type="similarity">
    <text evidence="1">Belongs to the ATPase delta chain family.</text>
</comment>
<protein>
    <recommendedName>
        <fullName evidence="1">ATP synthase subunit delta</fullName>
    </recommendedName>
    <alternativeName>
        <fullName evidence="1">ATP synthase F(1) sector subunit delta</fullName>
    </alternativeName>
    <alternativeName>
        <fullName evidence="1">F-type ATPase subunit delta</fullName>
        <shortName evidence="1">F-ATPase subunit delta</shortName>
    </alternativeName>
</protein>
<evidence type="ECO:0000255" key="1">
    <source>
        <dbReference type="HAMAP-Rule" id="MF_01416"/>
    </source>
</evidence>
<dbReference type="EMBL" id="CP000412">
    <property type="protein sequence ID" value="ABJ58266.1"/>
    <property type="molecule type" value="Genomic_DNA"/>
</dbReference>
<dbReference type="RefSeq" id="WP_011678119.1">
    <property type="nucleotide sequence ID" value="NC_008529.1"/>
</dbReference>
<dbReference type="SMR" id="Q04BA6"/>
<dbReference type="KEGG" id="lbu:LBUL_0640"/>
<dbReference type="HOGENOM" id="CLU_085114_4_1_9"/>
<dbReference type="BioCyc" id="LDEL321956:LBUL_RS03045-MONOMER"/>
<dbReference type="GO" id="GO:0005886">
    <property type="term" value="C:plasma membrane"/>
    <property type="evidence" value="ECO:0007669"/>
    <property type="project" value="UniProtKB-SubCell"/>
</dbReference>
<dbReference type="GO" id="GO:0045259">
    <property type="term" value="C:proton-transporting ATP synthase complex"/>
    <property type="evidence" value="ECO:0007669"/>
    <property type="project" value="UniProtKB-KW"/>
</dbReference>
<dbReference type="GO" id="GO:0046933">
    <property type="term" value="F:proton-transporting ATP synthase activity, rotational mechanism"/>
    <property type="evidence" value="ECO:0007669"/>
    <property type="project" value="UniProtKB-UniRule"/>
</dbReference>
<dbReference type="Gene3D" id="1.10.520.20">
    <property type="entry name" value="N-terminal domain of the delta subunit of the F1F0-ATP synthase"/>
    <property type="match status" value="1"/>
</dbReference>
<dbReference type="HAMAP" id="MF_01416">
    <property type="entry name" value="ATP_synth_delta_bact"/>
    <property type="match status" value="1"/>
</dbReference>
<dbReference type="InterPro" id="IPR026015">
    <property type="entry name" value="ATP_synth_OSCP/delta_N_sf"/>
</dbReference>
<dbReference type="InterPro" id="IPR020781">
    <property type="entry name" value="ATPase_OSCP/d_CS"/>
</dbReference>
<dbReference type="InterPro" id="IPR000711">
    <property type="entry name" value="ATPase_OSCP/dsu"/>
</dbReference>
<dbReference type="NCBIfam" id="TIGR01145">
    <property type="entry name" value="ATP_synt_delta"/>
    <property type="match status" value="1"/>
</dbReference>
<dbReference type="PANTHER" id="PTHR11910">
    <property type="entry name" value="ATP SYNTHASE DELTA CHAIN"/>
    <property type="match status" value="1"/>
</dbReference>
<dbReference type="Pfam" id="PF00213">
    <property type="entry name" value="OSCP"/>
    <property type="match status" value="1"/>
</dbReference>
<dbReference type="PRINTS" id="PR00125">
    <property type="entry name" value="ATPASEDELTA"/>
</dbReference>
<dbReference type="SUPFAM" id="SSF47928">
    <property type="entry name" value="N-terminal domain of the delta subunit of the F1F0-ATP synthase"/>
    <property type="match status" value="1"/>
</dbReference>
<dbReference type="PROSITE" id="PS00389">
    <property type="entry name" value="ATPASE_DELTA"/>
    <property type="match status" value="1"/>
</dbReference>
<gene>
    <name evidence="1" type="primary">atpH</name>
    <name type="ordered locus">LBUL_0640</name>
</gene>
<organism>
    <name type="scientific">Lactobacillus delbrueckii subsp. bulgaricus (strain ATCC BAA-365 / Lb-18)</name>
    <dbReference type="NCBI Taxonomy" id="321956"/>
    <lineage>
        <taxon>Bacteria</taxon>
        <taxon>Bacillati</taxon>
        <taxon>Bacillota</taxon>
        <taxon>Bacilli</taxon>
        <taxon>Lactobacillales</taxon>
        <taxon>Lactobacillaceae</taxon>
        <taxon>Lactobacillus</taxon>
    </lineage>
</organism>
<accession>Q04BA6</accession>